<reference key="1">
    <citation type="submission" date="2007-03" db="EMBL/GenBank/DDBJ databases">
        <title>Complete sequence of Desulfotomaculum reducens MI-1.</title>
        <authorList>
            <consortium name="US DOE Joint Genome Institute"/>
            <person name="Copeland A."/>
            <person name="Lucas S."/>
            <person name="Lapidus A."/>
            <person name="Barry K."/>
            <person name="Detter J.C."/>
            <person name="Glavina del Rio T."/>
            <person name="Hammon N."/>
            <person name="Israni S."/>
            <person name="Dalin E."/>
            <person name="Tice H."/>
            <person name="Pitluck S."/>
            <person name="Sims D."/>
            <person name="Brettin T."/>
            <person name="Bruce D."/>
            <person name="Han C."/>
            <person name="Tapia R."/>
            <person name="Schmutz J."/>
            <person name="Larimer F."/>
            <person name="Land M."/>
            <person name="Hauser L."/>
            <person name="Kyrpides N."/>
            <person name="Kim E."/>
            <person name="Tebo B.M."/>
            <person name="Richardson P."/>
        </authorList>
    </citation>
    <scope>NUCLEOTIDE SEQUENCE [LARGE SCALE GENOMIC DNA]</scope>
    <source>
        <strain>ATCC BAA-1160 / DSM 100696 / MI-1</strain>
    </source>
</reference>
<organism>
    <name type="scientific">Desulforamulus reducens (strain ATCC BAA-1160 / DSM 100696 / MI-1)</name>
    <name type="common">Desulfotomaculum reducens</name>
    <dbReference type="NCBI Taxonomy" id="349161"/>
    <lineage>
        <taxon>Bacteria</taxon>
        <taxon>Bacillati</taxon>
        <taxon>Bacillota</taxon>
        <taxon>Clostridia</taxon>
        <taxon>Eubacteriales</taxon>
        <taxon>Peptococcaceae</taxon>
        <taxon>Desulforamulus</taxon>
    </lineage>
</organism>
<evidence type="ECO:0000255" key="1">
    <source>
        <dbReference type="HAMAP-Rule" id="MF_00445"/>
    </source>
</evidence>
<gene>
    <name evidence="1" type="primary">nuoN</name>
    <name type="ordered locus">Dred_2036</name>
</gene>
<feature type="chain" id="PRO_0000391139" description="NADH-quinone oxidoreductase subunit N">
    <location>
        <begin position="1"/>
        <end position="476"/>
    </location>
</feature>
<feature type="transmembrane region" description="Helical" evidence="1">
    <location>
        <begin position="8"/>
        <end position="28"/>
    </location>
</feature>
<feature type="transmembrane region" description="Helical" evidence="1">
    <location>
        <begin position="35"/>
        <end position="55"/>
    </location>
</feature>
<feature type="transmembrane region" description="Helical" evidence="1">
    <location>
        <begin position="71"/>
        <end position="91"/>
    </location>
</feature>
<feature type="transmembrane region" description="Helical" evidence="1">
    <location>
        <begin position="102"/>
        <end position="122"/>
    </location>
</feature>
<feature type="transmembrane region" description="Helical" evidence="1">
    <location>
        <begin position="124"/>
        <end position="144"/>
    </location>
</feature>
<feature type="transmembrane region" description="Helical" evidence="1">
    <location>
        <begin position="159"/>
        <end position="179"/>
    </location>
</feature>
<feature type="transmembrane region" description="Helical" evidence="1">
    <location>
        <begin position="201"/>
        <end position="221"/>
    </location>
</feature>
<feature type="transmembrane region" description="Helical" evidence="1">
    <location>
        <begin position="239"/>
        <end position="259"/>
    </location>
</feature>
<feature type="transmembrane region" description="Helical" evidence="1">
    <location>
        <begin position="267"/>
        <end position="287"/>
    </location>
</feature>
<feature type="transmembrane region" description="Helical" evidence="1">
    <location>
        <begin position="295"/>
        <end position="315"/>
    </location>
</feature>
<feature type="transmembrane region" description="Helical" evidence="1">
    <location>
        <begin position="322"/>
        <end position="342"/>
    </location>
</feature>
<feature type="transmembrane region" description="Helical" evidence="1">
    <location>
        <begin position="366"/>
        <end position="386"/>
    </location>
</feature>
<feature type="transmembrane region" description="Helical" evidence="1">
    <location>
        <begin position="405"/>
        <end position="425"/>
    </location>
</feature>
<feature type="transmembrane region" description="Helical" evidence="1">
    <location>
        <begin position="437"/>
        <end position="457"/>
    </location>
</feature>
<protein>
    <recommendedName>
        <fullName evidence="1">NADH-quinone oxidoreductase subunit N</fullName>
        <ecNumber evidence="1">7.1.1.-</ecNumber>
    </recommendedName>
    <alternativeName>
        <fullName evidence="1">NADH dehydrogenase I subunit N</fullName>
    </alternativeName>
    <alternativeName>
        <fullName evidence="1">NDH-1 subunit N</fullName>
    </alternativeName>
</protein>
<name>NUON_DESRM</name>
<proteinExistence type="inferred from homology"/>
<accession>A4J650</accession>
<keyword id="KW-1003">Cell membrane</keyword>
<keyword id="KW-0472">Membrane</keyword>
<keyword id="KW-0520">NAD</keyword>
<keyword id="KW-0874">Quinone</keyword>
<keyword id="KW-1185">Reference proteome</keyword>
<keyword id="KW-1278">Translocase</keyword>
<keyword id="KW-0812">Transmembrane</keyword>
<keyword id="KW-1133">Transmembrane helix</keyword>
<keyword id="KW-0813">Transport</keyword>
<dbReference type="EC" id="7.1.1.-" evidence="1"/>
<dbReference type="EMBL" id="CP000612">
    <property type="protein sequence ID" value="ABO50553.1"/>
    <property type="molecule type" value="Genomic_DNA"/>
</dbReference>
<dbReference type="RefSeq" id="WP_011878359.1">
    <property type="nucleotide sequence ID" value="NC_009253.1"/>
</dbReference>
<dbReference type="SMR" id="A4J650"/>
<dbReference type="STRING" id="349161.Dred_2036"/>
<dbReference type="KEGG" id="drm:Dred_2036"/>
<dbReference type="eggNOG" id="COG1007">
    <property type="taxonomic scope" value="Bacteria"/>
</dbReference>
<dbReference type="HOGENOM" id="CLU_007100_1_5_9"/>
<dbReference type="OrthoDB" id="9807568at2"/>
<dbReference type="Proteomes" id="UP000001556">
    <property type="component" value="Chromosome"/>
</dbReference>
<dbReference type="GO" id="GO:0005886">
    <property type="term" value="C:plasma membrane"/>
    <property type="evidence" value="ECO:0007669"/>
    <property type="project" value="UniProtKB-SubCell"/>
</dbReference>
<dbReference type="GO" id="GO:0008137">
    <property type="term" value="F:NADH dehydrogenase (ubiquinone) activity"/>
    <property type="evidence" value="ECO:0007669"/>
    <property type="project" value="InterPro"/>
</dbReference>
<dbReference type="GO" id="GO:0050136">
    <property type="term" value="F:NADH:ubiquinone reductase (non-electrogenic) activity"/>
    <property type="evidence" value="ECO:0007669"/>
    <property type="project" value="UniProtKB-UniRule"/>
</dbReference>
<dbReference type="GO" id="GO:0048038">
    <property type="term" value="F:quinone binding"/>
    <property type="evidence" value="ECO:0007669"/>
    <property type="project" value="UniProtKB-KW"/>
</dbReference>
<dbReference type="GO" id="GO:0042773">
    <property type="term" value="P:ATP synthesis coupled electron transport"/>
    <property type="evidence" value="ECO:0007669"/>
    <property type="project" value="InterPro"/>
</dbReference>
<dbReference type="HAMAP" id="MF_00445">
    <property type="entry name" value="NDH1_NuoN_1"/>
    <property type="match status" value="1"/>
</dbReference>
<dbReference type="InterPro" id="IPR010096">
    <property type="entry name" value="NADH-Q_OxRdtase_suN/2"/>
</dbReference>
<dbReference type="InterPro" id="IPR001750">
    <property type="entry name" value="ND/Mrp_TM"/>
</dbReference>
<dbReference type="NCBIfam" id="TIGR01770">
    <property type="entry name" value="NDH_I_N"/>
    <property type="match status" value="1"/>
</dbReference>
<dbReference type="PANTHER" id="PTHR22773">
    <property type="entry name" value="NADH DEHYDROGENASE"/>
    <property type="match status" value="1"/>
</dbReference>
<dbReference type="Pfam" id="PF00361">
    <property type="entry name" value="Proton_antipo_M"/>
    <property type="match status" value="1"/>
</dbReference>
<dbReference type="PRINTS" id="PR01434">
    <property type="entry name" value="NADHDHGNASE5"/>
</dbReference>
<comment type="function">
    <text evidence="1">NDH-1 shuttles electrons from NADH, via FMN and iron-sulfur (Fe-S) centers, to quinones in the respiratory chain. The immediate electron acceptor for the enzyme in this species is believed to be a menaquinone. Couples the redox reaction to proton translocation (for every two electrons transferred, four hydrogen ions are translocated across the cytoplasmic membrane), and thus conserves the redox energy in a proton gradient.</text>
</comment>
<comment type="catalytic activity">
    <reaction evidence="1">
        <text>a quinone + NADH + 5 H(+)(in) = a quinol + NAD(+) + 4 H(+)(out)</text>
        <dbReference type="Rhea" id="RHEA:57888"/>
        <dbReference type="ChEBI" id="CHEBI:15378"/>
        <dbReference type="ChEBI" id="CHEBI:24646"/>
        <dbReference type="ChEBI" id="CHEBI:57540"/>
        <dbReference type="ChEBI" id="CHEBI:57945"/>
        <dbReference type="ChEBI" id="CHEBI:132124"/>
    </reaction>
</comment>
<comment type="subunit">
    <text evidence="1">NDH-1 is composed of 14 different subunits. Subunits NuoA, H, J, K, L, M, N constitute the membrane sector of the complex.</text>
</comment>
<comment type="subcellular location">
    <subcellularLocation>
        <location evidence="1">Cell membrane</location>
        <topology evidence="1">Multi-pass membrane protein</topology>
    </subcellularLocation>
</comment>
<comment type="similarity">
    <text evidence="1">Belongs to the complex I subunit 2 family.</text>
</comment>
<sequence>MEFNFALITTELALFILGLATFVLGLLVPSHSRRGLGSFALLGLLLVLGITIINWSNQGVLLDGMYLVDQYATFFKILCLISAILVVLGSFRYIDKQVGNQFEYYSTVIFTTLGMVVMASAGDFITLYLGLELMTISFVILVAFRSFEAKSLEAGMKYILLAGLSSAVLLYGLSLVYGATGTILIGEVAREIADKGSTPLLIVGVVMLVAGLGFKISAVPFHMWSPDVYEGAPTPVTSFLAVGSKAASFAVLLRLFAGGFGGIQEQWTLLVAVLAALSMLIGNLVAIPQTNIKRMLAYSSIAQAGYIMVGLVSATEAGIKGVMFYAFLYVFATIGAFTVVAIVSNQTNSDEIRDYAGLIQRAPLAASVMLICLLSMAGIPPLAGFVGKFYLFKTVVENHMWLVYLGLIMSMVSVYYYLRVALVMFRDEPKESAPIHVGGAATITLVITMVATIILGIYPGPLAEVANMAAQSFLLK</sequence>